<sequence length="63" mass="7372">MAHPKRRISRSRRDKRRAQYNAKTKAPAVATCPVTGQSHHSHRAYWFEGSLYFKGRVVMTKEK</sequence>
<feature type="chain" id="PRO_1000120106" description="Large ribosomal subunit protein bL32">
    <location>
        <begin position="1"/>
        <end position="63"/>
    </location>
</feature>
<feature type="region of interest" description="Disordered" evidence="2">
    <location>
        <begin position="1"/>
        <end position="27"/>
    </location>
</feature>
<feature type="compositionally biased region" description="Basic residues" evidence="2">
    <location>
        <begin position="1"/>
        <end position="18"/>
    </location>
</feature>
<keyword id="KW-1185">Reference proteome</keyword>
<keyword id="KW-0687">Ribonucleoprotein</keyword>
<keyword id="KW-0689">Ribosomal protein</keyword>
<organism>
    <name type="scientific">Chloroherpeton thalassium (strain ATCC 35110 / GB-78)</name>
    <dbReference type="NCBI Taxonomy" id="517418"/>
    <lineage>
        <taxon>Bacteria</taxon>
        <taxon>Pseudomonadati</taxon>
        <taxon>Chlorobiota</taxon>
        <taxon>Chlorobiia</taxon>
        <taxon>Chlorobiales</taxon>
        <taxon>Chloroherpetonaceae</taxon>
        <taxon>Chloroherpeton</taxon>
    </lineage>
</organism>
<proteinExistence type="inferred from homology"/>
<gene>
    <name evidence="1" type="primary">rpmF</name>
    <name type="ordered locus">Ctha_1844</name>
</gene>
<protein>
    <recommendedName>
        <fullName evidence="1">Large ribosomal subunit protein bL32</fullName>
    </recommendedName>
    <alternativeName>
        <fullName evidence="3">50S ribosomal protein L32</fullName>
    </alternativeName>
</protein>
<accession>B3QTV3</accession>
<evidence type="ECO:0000255" key="1">
    <source>
        <dbReference type="HAMAP-Rule" id="MF_00340"/>
    </source>
</evidence>
<evidence type="ECO:0000256" key="2">
    <source>
        <dbReference type="SAM" id="MobiDB-lite"/>
    </source>
</evidence>
<evidence type="ECO:0000305" key="3"/>
<reference key="1">
    <citation type="submission" date="2008-06" db="EMBL/GenBank/DDBJ databases">
        <title>Complete sequence of Chloroherpeton thalassium ATCC 35110.</title>
        <authorList>
            <consortium name="US DOE Joint Genome Institute"/>
            <person name="Lucas S."/>
            <person name="Copeland A."/>
            <person name="Lapidus A."/>
            <person name="Glavina del Rio T."/>
            <person name="Dalin E."/>
            <person name="Tice H."/>
            <person name="Bruce D."/>
            <person name="Goodwin L."/>
            <person name="Pitluck S."/>
            <person name="Schmutz J."/>
            <person name="Larimer F."/>
            <person name="Land M."/>
            <person name="Hauser L."/>
            <person name="Kyrpides N."/>
            <person name="Mikhailova N."/>
            <person name="Liu Z."/>
            <person name="Li T."/>
            <person name="Zhao F."/>
            <person name="Overmann J."/>
            <person name="Bryant D.A."/>
            <person name="Richardson P."/>
        </authorList>
    </citation>
    <scope>NUCLEOTIDE SEQUENCE [LARGE SCALE GENOMIC DNA]</scope>
    <source>
        <strain>ATCC 35110 / GB-78</strain>
    </source>
</reference>
<comment type="similarity">
    <text evidence="1">Belongs to the bacterial ribosomal protein bL32 family.</text>
</comment>
<dbReference type="EMBL" id="CP001100">
    <property type="protein sequence ID" value="ACF14301.1"/>
    <property type="molecule type" value="Genomic_DNA"/>
</dbReference>
<dbReference type="RefSeq" id="WP_012500385.1">
    <property type="nucleotide sequence ID" value="NC_011026.1"/>
</dbReference>
<dbReference type="SMR" id="B3QTV3"/>
<dbReference type="STRING" id="517418.Ctha_1844"/>
<dbReference type="KEGG" id="cts:Ctha_1844"/>
<dbReference type="eggNOG" id="COG0333">
    <property type="taxonomic scope" value="Bacteria"/>
</dbReference>
<dbReference type="HOGENOM" id="CLU_129084_2_3_10"/>
<dbReference type="OrthoDB" id="9812874at2"/>
<dbReference type="Proteomes" id="UP000001208">
    <property type="component" value="Chromosome"/>
</dbReference>
<dbReference type="GO" id="GO:0015934">
    <property type="term" value="C:large ribosomal subunit"/>
    <property type="evidence" value="ECO:0007669"/>
    <property type="project" value="InterPro"/>
</dbReference>
<dbReference type="GO" id="GO:0003735">
    <property type="term" value="F:structural constituent of ribosome"/>
    <property type="evidence" value="ECO:0007669"/>
    <property type="project" value="InterPro"/>
</dbReference>
<dbReference type="GO" id="GO:0006412">
    <property type="term" value="P:translation"/>
    <property type="evidence" value="ECO:0007669"/>
    <property type="project" value="UniProtKB-UniRule"/>
</dbReference>
<dbReference type="HAMAP" id="MF_00340">
    <property type="entry name" value="Ribosomal_bL32"/>
    <property type="match status" value="1"/>
</dbReference>
<dbReference type="InterPro" id="IPR002677">
    <property type="entry name" value="Ribosomal_bL32"/>
</dbReference>
<dbReference type="InterPro" id="IPR044957">
    <property type="entry name" value="Ribosomal_bL32_bact"/>
</dbReference>
<dbReference type="InterPro" id="IPR011332">
    <property type="entry name" value="Ribosomal_zn-bd"/>
</dbReference>
<dbReference type="NCBIfam" id="TIGR01031">
    <property type="entry name" value="rpmF_bact"/>
    <property type="match status" value="1"/>
</dbReference>
<dbReference type="PANTHER" id="PTHR35534">
    <property type="entry name" value="50S RIBOSOMAL PROTEIN L32"/>
    <property type="match status" value="1"/>
</dbReference>
<dbReference type="PANTHER" id="PTHR35534:SF1">
    <property type="entry name" value="LARGE RIBOSOMAL SUBUNIT PROTEIN BL32"/>
    <property type="match status" value="1"/>
</dbReference>
<dbReference type="Pfam" id="PF01783">
    <property type="entry name" value="Ribosomal_L32p"/>
    <property type="match status" value="1"/>
</dbReference>
<dbReference type="SUPFAM" id="SSF57829">
    <property type="entry name" value="Zn-binding ribosomal proteins"/>
    <property type="match status" value="1"/>
</dbReference>
<name>RL32_CHLT3</name>